<keyword id="KW-0687">Ribonucleoprotein</keyword>
<keyword id="KW-0689">Ribosomal protein</keyword>
<keyword id="KW-0694">RNA-binding</keyword>
<keyword id="KW-0699">rRNA-binding</keyword>
<organism>
    <name type="scientific">Mycobacterium avium (strain 104)</name>
    <dbReference type="NCBI Taxonomy" id="243243"/>
    <lineage>
        <taxon>Bacteria</taxon>
        <taxon>Bacillati</taxon>
        <taxon>Actinomycetota</taxon>
        <taxon>Actinomycetes</taxon>
        <taxon>Mycobacteriales</taxon>
        <taxon>Mycobacteriaceae</taxon>
        <taxon>Mycobacterium</taxon>
        <taxon>Mycobacterium avium complex (MAC)</taxon>
    </lineage>
</organism>
<proteinExistence type="inferred from homology"/>
<feature type="chain" id="PRO_1000053064" description="Large ribosomal subunit protein uL18">
    <location>
        <begin position="1"/>
        <end position="122"/>
    </location>
</feature>
<comment type="function">
    <text evidence="1">This is one of the proteins that bind and probably mediate the attachment of the 5S RNA into the large ribosomal subunit, where it forms part of the central protuberance.</text>
</comment>
<comment type="subunit">
    <text evidence="1">Part of the 50S ribosomal subunit; part of the 5S rRNA/L5/L18/L25 subcomplex. Contacts the 5S and 23S rRNAs.</text>
</comment>
<comment type="similarity">
    <text evidence="1">Belongs to the universal ribosomal protein uL18 family.</text>
</comment>
<accession>A0QKZ6</accession>
<name>RL18_MYCA1</name>
<sequence length="122" mass="13275">MGQSVSATRRVSRLRRHARLRKKIAGTPERPRLVVNRSARHIHVQLVNDENGTTVAAASSIEDDVRSLQGDKKARSVRVGQLIAERAKAAGIDSVVFDRGGYTYGGRIAALADAARENGLQF</sequence>
<protein>
    <recommendedName>
        <fullName evidence="1">Large ribosomal subunit protein uL18</fullName>
    </recommendedName>
    <alternativeName>
        <fullName evidence="2">50S ribosomal protein L18</fullName>
    </alternativeName>
</protein>
<dbReference type="EMBL" id="CP000479">
    <property type="protein sequence ID" value="ABK65687.1"/>
    <property type="molecule type" value="Genomic_DNA"/>
</dbReference>
<dbReference type="RefSeq" id="WP_003879452.1">
    <property type="nucleotide sequence ID" value="NC_008595.1"/>
</dbReference>
<dbReference type="SMR" id="A0QKZ6"/>
<dbReference type="KEGG" id="mav:MAV_4449"/>
<dbReference type="HOGENOM" id="CLU_098841_0_1_11"/>
<dbReference type="Proteomes" id="UP000001574">
    <property type="component" value="Chromosome"/>
</dbReference>
<dbReference type="GO" id="GO:0022625">
    <property type="term" value="C:cytosolic large ribosomal subunit"/>
    <property type="evidence" value="ECO:0007669"/>
    <property type="project" value="TreeGrafter"/>
</dbReference>
<dbReference type="GO" id="GO:0008097">
    <property type="term" value="F:5S rRNA binding"/>
    <property type="evidence" value="ECO:0007669"/>
    <property type="project" value="TreeGrafter"/>
</dbReference>
<dbReference type="GO" id="GO:0003735">
    <property type="term" value="F:structural constituent of ribosome"/>
    <property type="evidence" value="ECO:0007669"/>
    <property type="project" value="InterPro"/>
</dbReference>
<dbReference type="GO" id="GO:0006412">
    <property type="term" value="P:translation"/>
    <property type="evidence" value="ECO:0007669"/>
    <property type="project" value="UniProtKB-UniRule"/>
</dbReference>
<dbReference type="CDD" id="cd00432">
    <property type="entry name" value="Ribosomal_L18_L5e"/>
    <property type="match status" value="1"/>
</dbReference>
<dbReference type="FunFam" id="3.30.420.100:FF:000001">
    <property type="entry name" value="50S ribosomal protein L18"/>
    <property type="match status" value="1"/>
</dbReference>
<dbReference type="Gene3D" id="3.30.420.100">
    <property type="match status" value="1"/>
</dbReference>
<dbReference type="HAMAP" id="MF_01337_B">
    <property type="entry name" value="Ribosomal_uL18_B"/>
    <property type="match status" value="1"/>
</dbReference>
<dbReference type="InterPro" id="IPR004389">
    <property type="entry name" value="Ribosomal_uL18_bac-type"/>
</dbReference>
<dbReference type="InterPro" id="IPR005484">
    <property type="entry name" value="Ribosomal_uL18_bac/euk"/>
</dbReference>
<dbReference type="NCBIfam" id="TIGR00060">
    <property type="entry name" value="L18_bact"/>
    <property type="match status" value="1"/>
</dbReference>
<dbReference type="PANTHER" id="PTHR12899">
    <property type="entry name" value="39S RIBOSOMAL PROTEIN L18, MITOCHONDRIAL"/>
    <property type="match status" value="1"/>
</dbReference>
<dbReference type="PANTHER" id="PTHR12899:SF3">
    <property type="entry name" value="LARGE RIBOSOMAL SUBUNIT PROTEIN UL18M"/>
    <property type="match status" value="1"/>
</dbReference>
<dbReference type="Pfam" id="PF00861">
    <property type="entry name" value="Ribosomal_L18p"/>
    <property type="match status" value="1"/>
</dbReference>
<dbReference type="SUPFAM" id="SSF53137">
    <property type="entry name" value="Translational machinery components"/>
    <property type="match status" value="1"/>
</dbReference>
<gene>
    <name evidence="1" type="primary">rplR</name>
    <name type="ordered locus">MAV_4449</name>
</gene>
<reference key="1">
    <citation type="submission" date="2006-10" db="EMBL/GenBank/DDBJ databases">
        <authorList>
            <person name="Fleischmann R.D."/>
            <person name="Dodson R.J."/>
            <person name="Haft D.H."/>
            <person name="Merkel J.S."/>
            <person name="Nelson W.C."/>
            <person name="Fraser C.M."/>
        </authorList>
    </citation>
    <scope>NUCLEOTIDE SEQUENCE [LARGE SCALE GENOMIC DNA]</scope>
    <source>
        <strain>104</strain>
    </source>
</reference>
<evidence type="ECO:0000255" key="1">
    <source>
        <dbReference type="HAMAP-Rule" id="MF_01337"/>
    </source>
</evidence>
<evidence type="ECO:0000305" key="2"/>